<organism>
    <name type="scientific">Escherichia coli O6:H1 (strain CFT073 / ATCC 700928 / UPEC)</name>
    <dbReference type="NCBI Taxonomy" id="199310"/>
    <lineage>
        <taxon>Bacteria</taxon>
        <taxon>Pseudomonadati</taxon>
        <taxon>Pseudomonadota</taxon>
        <taxon>Gammaproteobacteria</taxon>
        <taxon>Enterobacterales</taxon>
        <taxon>Enterobacteriaceae</taxon>
        <taxon>Escherichia</taxon>
    </lineage>
</organism>
<name>ULAE_ECOL6</name>
<dbReference type="EC" id="5.1.3.22" evidence="1"/>
<dbReference type="EMBL" id="AE014075">
    <property type="protein sequence ID" value="AAN83708.1"/>
    <property type="molecule type" value="Genomic_DNA"/>
</dbReference>
<dbReference type="RefSeq" id="WP_000949498.1">
    <property type="nucleotide sequence ID" value="NZ_CP051263.1"/>
</dbReference>
<dbReference type="SMR" id="Q8FAI7"/>
<dbReference type="STRING" id="199310.c5287"/>
<dbReference type="GeneID" id="86861409"/>
<dbReference type="KEGG" id="ecc:c5287"/>
<dbReference type="eggNOG" id="COG3623">
    <property type="taxonomic scope" value="Bacteria"/>
</dbReference>
<dbReference type="HOGENOM" id="CLU_082738_0_0_6"/>
<dbReference type="BioCyc" id="ECOL199310:C5287-MONOMER"/>
<dbReference type="UniPathway" id="UPA00263">
    <property type="reaction ID" value="UER00379"/>
</dbReference>
<dbReference type="Proteomes" id="UP000001410">
    <property type="component" value="Chromosome"/>
</dbReference>
<dbReference type="GO" id="GO:0016861">
    <property type="term" value="F:intramolecular oxidoreductase activity, interconverting aldoses and ketoses"/>
    <property type="evidence" value="ECO:0007669"/>
    <property type="project" value="InterPro"/>
</dbReference>
<dbReference type="GO" id="GO:0034015">
    <property type="term" value="F:L-ribulose-5-phosphate 3-epimerase activity"/>
    <property type="evidence" value="ECO:0007669"/>
    <property type="project" value="UniProtKB-UniRule"/>
</dbReference>
<dbReference type="GO" id="GO:0019854">
    <property type="term" value="P:L-ascorbic acid catabolic process"/>
    <property type="evidence" value="ECO:0007669"/>
    <property type="project" value="UniProtKB-UniRule"/>
</dbReference>
<dbReference type="FunFam" id="3.20.20.150:FF:000003">
    <property type="entry name" value="L-ribulose-5-phosphate 3-epimerase UlaE"/>
    <property type="match status" value="1"/>
</dbReference>
<dbReference type="Gene3D" id="3.20.20.150">
    <property type="entry name" value="Divalent-metal-dependent TIM barrel enzymes"/>
    <property type="match status" value="1"/>
</dbReference>
<dbReference type="HAMAP" id="MF_01951">
    <property type="entry name" value="UlaE"/>
    <property type="match status" value="1"/>
</dbReference>
<dbReference type="InterPro" id="IPR004560">
    <property type="entry name" value="L-Ru-5P_3-Epase"/>
</dbReference>
<dbReference type="InterPro" id="IPR023492">
    <property type="entry name" value="L-Ru-5P_3-Epase_Enterobacteria"/>
</dbReference>
<dbReference type="InterPro" id="IPR050417">
    <property type="entry name" value="Sugar_Epim/Isomerase"/>
</dbReference>
<dbReference type="InterPro" id="IPR036237">
    <property type="entry name" value="Xyl_isomerase-like_sf"/>
</dbReference>
<dbReference type="InterPro" id="IPR013022">
    <property type="entry name" value="Xyl_isomerase-like_TIM-brl"/>
</dbReference>
<dbReference type="NCBIfam" id="TIGR00542">
    <property type="entry name" value="hxl6Piso_put"/>
    <property type="match status" value="1"/>
</dbReference>
<dbReference type="NCBIfam" id="NF009688">
    <property type="entry name" value="PRK13209.1"/>
    <property type="match status" value="1"/>
</dbReference>
<dbReference type="NCBIfam" id="NF009689">
    <property type="entry name" value="PRK13210.1"/>
    <property type="match status" value="1"/>
</dbReference>
<dbReference type="PANTHER" id="PTHR43489">
    <property type="entry name" value="ISOMERASE"/>
    <property type="match status" value="1"/>
</dbReference>
<dbReference type="PANTHER" id="PTHR43489:SF8">
    <property type="entry name" value="L-RIBULOSE-5-PHOSPHATE 3-EPIMERASE ULAE"/>
    <property type="match status" value="1"/>
</dbReference>
<dbReference type="Pfam" id="PF01261">
    <property type="entry name" value="AP_endonuc_2"/>
    <property type="match status" value="1"/>
</dbReference>
<dbReference type="SUPFAM" id="SSF51658">
    <property type="entry name" value="Xylose isomerase-like"/>
    <property type="match status" value="1"/>
</dbReference>
<reference key="1">
    <citation type="journal article" date="2002" name="Proc. Natl. Acad. Sci. U.S.A.">
        <title>Extensive mosaic structure revealed by the complete genome sequence of uropathogenic Escherichia coli.</title>
        <authorList>
            <person name="Welch R.A."/>
            <person name="Burland V."/>
            <person name="Plunkett G. III"/>
            <person name="Redford P."/>
            <person name="Roesch P."/>
            <person name="Rasko D."/>
            <person name="Buckles E.L."/>
            <person name="Liou S.-R."/>
            <person name="Boutin A."/>
            <person name="Hackett J."/>
            <person name="Stroud D."/>
            <person name="Mayhew G.F."/>
            <person name="Rose D.J."/>
            <person name="Zhou S."/>
            <person name="Schwartz D.C."/>
            <person name="Perna N.T."/>
            <person name="Mobley H.L.T."/>
            <person name="Donnenberg M.S."/>
            <person name="Blattner F.R."/>
        </authorList>
    </citation>
    <scope>NUCLEOTIDE SEQUENCE [LARGE SCALE GENOMIC DNA]</scope>
    <source>
        <strain>CFT073 / ATCC 700928 / UPEC</strain>
    </source>
</reference>
<protein>
    <recommendedName>
        <fullName evidence="1">L-ribulose-5-phosphate 3-epimerase UlaE</fullName>
        <ecNumber evidence="1">5.1.3.22</ecNumber>
    </recommendedName>
    <alternativeName>
        <fullName evidence="1">L-ascorbate utilization protein E</fullName>
    </alternativeName>
    <alternativeName>
        <fullName evidence="1">L-xylulose-5-phosphate 3-epimerase</fullName>
    </alternativeName>
</protein>
<feature type="chain" id="PRO_0000233252" description="L-ribulose-5-phosphate 3-epimerase UlaE">
    <location>
        <begin position="1"/>
        <end position="284"/>
    </location>
</feature>
<accession>Q8FAI7</accession>
<evidence type="ECO:0000255" key="1">
    <source>
        <dbReference type="HAMAP-Rule" id="MF_01951"/>
    </source>
</evidence>
<gene>
    <name evidence="1" type="primary">ulaE</name>
    <name type="ordered locus">c5287</name>
</gene>
<keyword id="KW-0413">Isomerase</keyword>
<keyword id="KW-1185">Reference proteome</keyword>
<proteinExistence type="inferred from homology"/>
<comment type="function">
    <text evidence="1">Catalyzes the isomerization of L-xylulose-5-phosphate to L-ribulose-5-phosphate. Is involved in the anaerobic L-ascorbate utilization.</text>
</comment>
<comment type="catalytic activity">
    <reaction evidence="1">
        <text>L-ribulose 5-phosphate = L-xylulose 5-phosphate</text>
        <dbReference type="Rhea" id="RHEA:18497"/>
        <dbReference type="ChEBI" id="CHEBI:57829"/>
        <dbReference type="ChEBI" id="CHEBI:58226"/>
        <dbReference type="EC" id="5.1.3.22"/>
    </reaction>
</comment>
<comment type="pathway">
    <text evidence="1">Cofactor degradation; L-ascorbate degradation; D-xylulose 5-phosphate from L-ascorbate: step 3/4.</text>
</comment>
<comment type="induction">
    <text evidence="1">Induced by L-ascorbate. Repressed by UlaR.</text>
</comment>
<comment type="similarity">
    <text evidence="1">Belongs to the L-ribulose-5-phosphate 3-epimerase family.</text>
</comment>
<sequence>MLSKQIPLGIYEKALPAGECWLERLQLAKTLGFDFVEMSVDETDDRLSRLDWSREQRLALVNAIVETGVRVPSMCLSAHRRFPLGSEDDAVRAQGLEIMRKAIQFAQDVGIRVIQLAGYDVYYQEANNETRRRFRDGLKESVEMASRAQVTLAMEIMDYPLMNSISKALGYAHYLNNPWFQLYPDIGNLSAWDNDVQMELQAGIGHIVAVHVKDTKPGVFKNVPFGEGVVDFERCFETLKQSGYCGPYLIEMWSETAEDPAAEVAKARDWVKARMAKAGMVEAA</sequence>